<organism>
    <name type="scientific">Lens culinaris</name>
    <name type="common">Lentil</name>
    <name type="synonym">Cicer lens</name>
    <dbReference type="NCBI Taxonomy" id="3864"/>
    <lineage>
        <taxon>Eukaryota</taxon>
        <taxon>Viridiplantae</taxon>
        <taxon>Streptophyta</taxon>
        <taxon>Embryophyta</taxon>
        <taxon>Tracheophyta</taxon>
        <taxon>Spermatophyta</taxon>
        <taxon>Magnoliopsida</taxon>
        <taxon>eudicotyledons</taxon>
        <taxon>Gunneridae</taxon>
        <taxon>Pentapetalae</taxon>
        <taxon>rosids</taxon>
        <taxon>fabids</taxon>
        <taxon>Fabales</taxon>
        <taxon>Fabaceae</taxon>
        <taxon>Papilionoideae</taxon>
        <taxon>50 kb inversion clade</taxon>
        <taxon>NPAAA clade</taxon>
        <taxon>Hologalegina</taxon>
        <taxon>IRL clade</taxon>
        <taxon>Fabeae</taxon>
        <taxon>Lens</taxon>
    </lineage>
</organism>
<comment type="function">
    <text evidence="2">Binds hemin and thiamine.</text>
</comment>
<comment type="subunit">
    <text evidence="2">Dimer.</text>
</comment>
<comment type="subcellular location">
    <subcellularLocation>
        <location evidence="1">Cytoplasm</location>
        <location evidence="1">Cytosol</location>
    </subcellularLocation>
</comment>
<comment type="tissue specificity">
    <text evidence="2">Expressed in seeds (at protein level).</text>
</comment>
<comment type="miscellaneous">
    <text evidence="2">On the 2D-gel the determined pI of this protein is: 5.7, its MW is: 26 kDa.</text>
</comment>
<reference evidence="4" key="1">
    <citation type="journal article" date="2011" name="J. Agric. Food Chem.">
        <title>Biochemical and functional characterization of an albumin protein belonging to the hemopexin superfamily from Lens culinaris seeds.</title>
        <authorList>
            <person name="Scarafoni A."/>
            <person name="Gualtieri E."/>
            <person name="Barbiroli A."/>
            <person name="Carpen A."/>
            <person name="Negri A."/>
            <person name="Duranti M."/>
        </authorList>
    </citation>
    <scope>PROTEIN SEQUENCE</scope>
    <scope>FUNCTION</scope>
    <scope>SUBUNIT</scope>
    <scope>TISSUE SPECIFICITY</scope>
    <source>
        <tissue evidence="2">Seed</tissue>
    </source>
</reference>
<proteinExistence type="evidence at protein level"/>
<protein>
    <recommendedName>
        <fullName evidence="3">Albumin-2</fullName>
    </recommendedName>
    <alternativeName>
        <fullName evidence="1">PA2</fullName>
    </alternativeName>
    <alternativeName>
        <fullName evidence="3">PA2-like protein</fullName>
    </alternativeName>
</protein>
<name>ALB2_LENCU</name>
<feature type="chain" id="PRO_0000399752" description="Albumin-2">
    <location>
        <begin position="1"/>
        <end position="37" status="greater than"/>
    </location>
</feature>
<feature type="repeat" description="Hemopexin">
    <location>
        <begin position="6"/>
        <end position="37" status="greater than"/>
    </location>
</feature>
<feature type="non-terminal residue" evidence="3">
    <location>
        <position position="37"/>
    </location>
</feature>
<dbReference type="GO" id="GO:0005829">
    <property type="term" value="C:cytosol"/>
    <property type="evidence" value="ECO:0007669"/>
    <property type="project" value="UniProtKB-SubCell"/>
</dbReference>
<dbReference type="GO" id="GO:0045735">
    <property type="term" value="F:nutrient reservoir activity"/>
    <property type="evidence" value="ECO:0007669"/>
    <property type="project" value="UniProtKB-KW"/>
</dbReference>
<dbReference type="GO" id="GO:0030975">
    <property type="term" value="F:thiamine binding"/>
    <property type="evidence" value="ECO:0000314"/>
    <property type="project" value="UniProtKB"/>
</dbReference>
<accession>P86782</accession>
<sequence length="37" mass="4180">TLTGYIANFSVLNXEAYLFINDKYVLLDYAPGTXNDK</sequence>
<evidence type="ECO:0000250" key="1">
    <source>
        <dbReference type="UniProtKB" id="P08688"/>
    </source>
</evidence>
<evidence type="ECO:0000269" key="2">
    <source>
    </source>
</evidence>
<evidence type="ECO:0000303" key="3">
    <source>
    </source>
</evidence>
<evidence type="ECO:0000305" key="4"/>
<keyword id="KW-0963">Cytoplasm</keyword>
<keyword id="KW-0903">Direct protein sequencing</keyword>
<keyword id="KW-0708">Seed storage protein</keyword>
<keyword id="KW-0758">Storage protein</keyword>